<accession>Q8K0V4</accession>
<accession>B2RUA7</accession>
<keyword id="KW-0963">Cytoplasm</keyword>
<keyword id="KW-0217">Developmental protein</keyword>
<keyword id="KW-0539">Nucleus</keyword>
<keyword id="KW-0597">Phosphoprotein</keyword>
<keyword id="KW-1185">Reference proteome</keyword>
<keyword id="KW-0678">Repressor</keyword>
<keyword id="KW-0943">RNA-mediated gene silencing</keyword>
<keyword id="KW-0804">Transcription</keyword>
<keyword id="KW-0805">Transcription regulation</keyword>
<keyword id="KW-0810">Translation regulation</keyword>
<feature type="chain" id="PRO_0000198334" description="CCR4-NOT transcription complex subunit 3">
    <location>
        <begin position="1"/>
        <end position="751"/>
    </location>
</feature>
<feature type="region of interest" description="Disordered" evidence="3">
    <location>
        <begin position="240"/>
        <end position="534"/>
    </location>
</feature>
<feature type="region of interest" description="Repressor domain" evidence="1">
    <location>
        <begin position="659"/>
        <end position="751"/>
    </location>
</feature>
<feature type="compositionally biased region" description="Low complexity" evidence="3">
    <location>
        <begin position="257"/>
        <end position="268"/>
    </location>
</feature>
<feature type="compositionally biased region" description="Basic and acidic residues" evidence="3">
    <location>
        <begin position="284"/>
        <end position="293"/>
    </location>
</feature>
<feature type="compositionally biased region" description="Polar residues" evidence="3">
    <location>
        <begin position="294"/>
        <end position="315"/>
    </location>
</feature>
<feature type="compositionally biased region" description="Pro residues" evidence="3">
    <location>
        <begin position="317"/>
        <end position="330"/>
    </location>
</feature>
<feature type="compositionally biased region" description="Polar residues" evidence="3">
    <location>
        <begin position="339"/>
        <end position="348"/>
    </location>
</feature>
<feature type="compositionally biased region" description="Low complexity" evidence="3">
    <location>
        <begin position="441"/>
        <end position="450"/>
    </location>
</feature>
<feature type="compositionally biased region" description="Polar residues" evidence="3">
    <location>
        <begin position="463"/>
        <end position="472"/>
    </location>
</feature>
<feature type="compositionally biased region" description="Low complexity" evidence="3">
    <location>
        <begin position="473"/>
        <end position="498"/>
    </location>
</feature>
<feature type="modified residue" description="Phosphothreonine" evidence="2">
    <location>
        <position position="292"/>
    </location>
</feature>
<feature type="modified residue" description="Phosphoserine" evidence="10">
    <location>
        <position position="299"/>
    </location>
</feature>
<feature type="modified residue" description="Phosphoserine" evidence="2">
    <location>
        <position position="540"/>
    </location>
</feature>
<sequence>MADKRKLQGEIDRCLKKVSEGVEQFEDIWQKLHNAANANQKEKYEADLKKEIKKLQRLRDQIKTWVASNEIKDKRQLIENRKLIETQMERFKVVERETKTKAYSKEGLGLAQKVDPAQKEKEEVGQWLTNTIDTLNMQVDQFESEVESLSVQTRKKKGDKDKQDRIEGLKRHIEKHRYHVRMLETILRMLDNDSILVDAIRKIKDDVEYYVDSSQDPDFEENEFLYDDLDLEDIPQALVATSPPSHSHMEDEIFNQSSSTPTSTTSSSPIPPSPANCTTENSEDDKKRGRSTDSEVSQSPAKNGSKPVHSNQHPQSPAVPPTYPSGPPPTTSALSSTPGNNGASTPAAPTSALGPKASPAPSHNSGTPAPYAQAVAPPNASGPSNAQPRPPSAQPSGGSGGGSGGSSSNSNSGTGGGAGKQNGATSYSSVVADSPAEVTLSSSGGSSASSQALGPTSGPHNPAPSTSKESSTAAPSGAGNVASGSGNNSGGPSLLVPLPVNPPSSPTPSFSEAKAAGTLLNGPPQFSTTPEIKAPEPLSSLKSMAERAAISSGIEDPVPTLHLTDRDIILSSTSAPPTSSQPPLQLSEVNIPLSLGVCPLGPVSLTKEQLYQQAMEEAAWHHMPHPSDSERIRQYLPRNPCPTPPYHHQMPPPHSDTVEFYQRLSTETLFFIFYYLEGTKAQYLAAKALKKQSWRFHTKYMMWFQRHEEPKTITDEFEQGTYIYFDYEKWGQRKKEGFTFEYRYLEDRDLQ</sequence>
<evidence type="ECO:0000250" key="1"/>
<evidence type="ECO:0000250" key="2">
    <source>
        <dbReference type="UniProtKB" id="O75175"/>
    </source>
</evidence>
<evidence type="ECO:0000256" key="3">
    <source>
        <dbReference type="SAM" id="MobiDB-lite"/>
    </source>
</evidence>
<evidence type="ECO:0000269" key="4">
    <source>
    </source>
</evidence>
<evidence type="ECO:0000269" key="5">
    <source>
    </source>
</evidence>
<evidence type="ECO:0000269" key="6">
    <source>
    </source>
</evidence>
<evidence type="ECO:0000269" key="7">
    <source>
    </source>
</evidence>
<evidence type="ECO:0000305" key="8"/>
<evidence type="ECO:0000305" key="9">
    <source>
    </source>
</evidence>
<evidence type="ECO:0007744" key="10">
    <source>
    </source>
</evidence>
<protein>
    <recommendedName>
        <fullName>CCR4-NOT transcription complex subunit 3</fullName>
    </recommendedName>
    <alternativeName>
        <fullName>CCR4-associated factor 3</fullName>
    </alternativeName>
</protein>
<comment type="function">
    <text evidence="5 6 7">Component of the CCR4-NOT complex which is one of the major cellular mRNA deadenylases and is linked to various cellular processes including bulk mRNA degradation, miRNA-mediated repression, translational repression during translational initiation and general transcription regulation (PubMed:34210974). Additional complex functions may be a consequence of its influence on mRNA expression. May be involved in metabolic regulation; may be involved in recruitment of the CCR4-NOT complex to deadenylation target mRNAs involved in energy metabolism. Involved in mitotic progression and regulation of the spindle assembly checkpoint by regulating the stability of MAD1L1 mRNA. Can repress transcription and may link the CCR4-NOT complex to transcriptional regulation; the repressive function may involve histone deacetylases. Involved in the maintenance of embryonic stem (ES) cell identity; prevents their differentiation towards extraembryonic trophectoderm lineages.</text>
</comment>
<comment type="subunit">
    <text evidence="2 4 7">Component of the CCR4-NOT complex; distinct complexes seem to exist that differ in the participation of probably mutually exclusive catalytic subunits. In the complex interacts directly with CNOT2. Interacts with TIP120B and NANOS2 (PubMed:20133598). Interacts with EBF1 (By similarity). Interacts in an RNA-independent manner with BICC1 (via KH domains) (PubMed:34210974).</text>
</comment>
<comment type="subcellular location">
    <subcellularLocation>
        <location evidence="9">Nucleus</location>
    </subcellularLocation>
    <subcellularLocation>
        <location evidence="4">Cytoplasm</location>
        <location evidence="4">P-body</location>
    </subcellularLocation>
    <text>NANOS2 promotes its localization to P-body.</text>
</comment>
<comment type="developmental stage">
    <text evidence="6">Expressed in embryonic stem (ES) cells and in inner cell mass (ICM) of the blastocyst.</text>
</comment>
<comment type="induction">
    <text evidence="5">Decreased levels in liver and white adipose tissues upon fasting,.</text>
</comment>
<comment type="similarity">
    <text evidence="8">Belongs to the CNOT2/3/5 family.</text>
</comment>
<name>CNOT3_MOUSE</name>
<proteinExistence type="evidence at protein level"/>
<organism>
    <name type="scientific">Mus musculus</name>
    <name type="common">Mouse</name>
    <dbReference type="NCBI Taxonomy" id="10090"/>
    <lineage>
        <taxon>Eukaryota</taxon>
        <taxon>Metazoa</taxon>
        <taxon>Chordata</taxon>
        <taxon>Craniata</taxon>
        <taxon>Vertebrata</taxon>
        <taxon>Euteleostomi</taxon>
        <taxon>Mammalia</taxon>
        <taxon>Eutheria</taxon>
        <taxon>Euarchontoglires</taxon>
        <taxon>Glires</taxon>
        <taxon>Rodentia</taxon>
        <taxon>Myomorpha</taxon>
        <taxon>Muroidea</taxon>
        <taxon>Muridae</taxon>
        <taxon>Murinae</taxon>
        <taxon>Mus</taxon>
        <taxon>Mus</taxon>
    </lineage>
</organism>
<reference key="1">
    <citation type="journal article" date="2004" name="Genome Res.">
        <title>The status, quality, and expansion of the NIH full-length cDNA project: the Mammalian Gene Collection (MGC).</title>
        <authorList>
            <consortium name="The MGC Project Team"/>
        </authorList>
    </citation>
    <scope>NUCLEOTIDE SEQUENCE [LARGE SCALE MRNA]</scope>
    <source>
        <tissue>Brain</tissue>
        <tissue>Embryo</tissue>
        <tissue>Retina</tissue>
    </source>
</reference>
<reference key="2">
    <citation type="journal article" date="2010" name="Cell">
        <title>A tissue-specific atlas of mouse protein phosphorylation and expression.</title>
        <authorList>
            <person name="Huttlin E.L."/>
            <person name="Jedrychowski M.P."/>
            <person name="Elias J.E."/>
            <person name="Goswami T."/>
            <person name="Rad R."/>
            <person name="Beausoleil S.A."/>
            <person name="Villen J."/>
            <person name="Haas W."/>
            <person name="Sowa M.E."/>
            <person name="Gygi S.P."/>
        </authorList>
    </citation>
    <scope>PHOSPHORYLATION [LARGE SCALE ANALYSIS] AT SER-299</scope>
    <scope>IDENTIFICATION BY MASS SPECTROMETRY [LARGE SCALE ANALYSIS]</scope>
    <source>
        <tissue>Lung</tissue>
        <tissue>Testis</tissue>
    </source>
</reference>
<reference key="3">
    <citation type="journal article" date="2010" name="Proc. Natl. Acad. Sci. U.S.A.">
        <title>NANOS2 interacts with the CCR4-NOT deadenylation complex and leads to suppression of specific RNAs.</title>
        <authorList>
            <person name="Suzuki A."/>
            <person name="Igarashi K."/>
            <person name="Aisaki K."/>
            <person name="Kanno J."/>
            <person name="Saga Y."/>
        </authorList>
    </citation>
    <scope>SUBCELLULAR LOCATION</scope>
    <scope>INTERACTION WITH NANOS2</scope>
</reference>
<reference key="4">
    <citation type="journal article" date="2011" name="EMBO J.">
        <title>Obesity resistance and increased hepatic expression of catabolism-related mRNAs in Cnot3+/- mice.</title>
        <authorList>
            <person name="Morita M."/>
            <person name="Oike Y."/>
            <person name="Nagashima T."/>
            <person name="Kadomatsu T."/>
            <person name="Tabata M."/>
            <person name="Suzuki T."/>
            <person name="Nakamura T."/>
            <person name="Yoshida N."/>
            <person name="Okada M."/>
            <person name="Yamamoto T."/>
        </authorList>
    </citation>
    <scope>FUNCTION</scope>
    <scope>INDUCTION</scope>
</reference>
<reference key="5">
    <citation type="journal article" date="2012" name="Stem Cells">
        <title>Cnot1, Cnot2, and Cnot3 maintain mouse and human ESC identity and inhibit extraembryonic differentiation.</title>
        <authorList>
            <person name="Zheng X."/>
            <person name="Dumitru R."/>
            <person name="Lackford B.L."/>
            <person name="Freudenberg J.M."/>
            <person name="Singh A.P."/>
            <person name="Archer T.K."/>
            <person name="Jothi R."/>
            <person name="Hu G."/>
        </authorList>
    </citation>
    <scope>FUNCTION</scope>
    <scope>DEVELOPMENTAL STAGE</scope>
</reference>
<reference key="6">
    <citation type="journal article" date="2021" name="Nat. Commun.">
        <title>Fluid flow-induced left-right asymmetric decay of Dand5 mRNA in the mouse embryo requires a Bicc1-Ccr4 RNA degradation complex.</title>
        <authorList>
            <person name="Minegishi K."/>
            <person name="Rothe B."/>
            <person name="Komatsu K.R."/>
            <person name="Ono H."/>
            <person name="Ikawa Y."/>
            <person name="Nishimura H."/>
            <person name="Katoh T.A."/>
            <person name="Kajikawa E."/>
            <person name="Sai X."/>
            <person name="Miyashita E."/>
            <person name="Takaoka K."/>
            <person name="Bando K."/>
            <person name="Kiyonari H."/>
            <person name="Yamamoto T."/>
            <person name="Saito H."/>
            <person name="Constam D.B."/>
            <person name="Hamada H."/>
        </authorList>
    </citation>
    <scope>FUNCTION</scope>
    <scope>INTERACTION WITH BICC1</scope>
</reference>
<gene>
    <name type="primary">Cnot3</name>
    <name type="synonym">Not3</name>
</gene>
<dbReference type="EMBL" id="BC030332">
    <property type="protein sequence ID" value="AAH30332.1"/>
    <property type="molecule type" value="mRNA"/>
</dbReference>
<dbReference type="EMBL" id="BC053437">
    <property type="protein sequence ID" value="AAH53437.1"/>
    <property type="molecule type" value="mRNA"/>
</dbReference>
<dbReference type="EMBL" id="BC141041">
    <property type="protein sequence ID" value="AAI41042.1"/>
    <property type="molecule type" value="mRNA"/>
</dbReference>
<dbReference type="CCDS" id="CCDS20721.1"/>
<dbReference type="RefSeq" id="NP_666288.1">
    <property type="nucleotide sequence ID" value="NM_146176.3"/>
</dbReference>
<dbReference type="RefSeq" id="XP_011248803.1">
    <property type="nucleotide sequence ID" value="XM_011250501.2"/>
</dbReference>
<dbReference type="RefSeq" id="XP_017177635.1">
    <property type="nucleotide sequence ID" value="XM_017322146.3"/>
</dbReference>
<dbReference type="RefSeq" id="XP_030098266.1">
    <property type="nucleotide sequence ID" value="XM_030242406.2"/>
</dbReference>
<dbReference type="RefSeq" id="XP_030098267.1">
    <property type="nucleotide sequence ID" value="XM_030242407.2"/>
</dbReference>
<dbReference type="RefSeq" id="XP_030098268.1">
    <property type="nucleotide sequence ID" value="XM_030242408.2"/>
</dbReference>
<dbReference type="RefSeq" id="XP_030098269.1">
    <property type="nucleotide sequence ID" value="XM_030242409.2"/>
</dbReference>
<dbReference type="RefSeq" id="XP_036008823.1">
    <property type="nucleotide sequence ID" value="XM_036152930.1"/>
</dbReference>
<dbReference type="SMR" id="Q8K0V4"/>
<dbReference type="BioGRID" id="231295">
    <property type="interactions" value="66"/>
</dbReference>
<dbReference type="CORUM" id="Q8K0V4"/>
<dbReference type="DIP" id="DIP-46844N"/>
<dbReference type="FunCoup" id="Q8K0V4">
    <property type="interactions" value="1390"/>
</dbReference>
<dbReference type="IntAct" id="Q8K0V4">
    <property type="interactions" value="21"/>
</dbReference>
<dbReference type="MINT" id="Q8K0V4"/>
<dbReference type="STRING" id="10090.ENSMUSP00000039098"/>
<dbReference type="GlyGen" id="Q8K0V4">
    <property type="glycosylation" value="7 sites, 1 N-linked glycan (1 site)"/>
</dbReference>
<dbReference type="iPTMnet" id="Q8K0V4"/>
<dbReference type="PhosphoSitePlus" id="Q8K0V4"/>
<dbReference type="SwissPalm" id="Q8K0V4"/>
<dbReference type="PaxDb" id="10090-ENSMUSP00000039098"/>
<dbReference type="PeptideAtlas" id="Q8K0V4"/>
<dbReference type="ProteomicsDB" id="283407"/>
<dbReference type="Pumba" id="Q8K0V4"/>
<dbReference type="Antibodypedia" id="1756">
    <property type="antibodies" value="256 antibodies from 28 providers"/>
</dbReference>
<dbReference type="DNASU" id="232791"/>
<dbReference type="Ensembl" id="ENSMUST00000038913.16">
    <property type="protein sequence ID" value="ENSMUSP00000039098.10"/>
    <property type="gene ID" value="ENSMUSG00000035632.17"/>
</dbReference>
<dbReference type="GeneID" id="232791"/>
<dbReference type="KEGG" id="mmu:232791"/>
<dbReference type="UCSC" id="uc009evl.2">
    <property type="organism name" value="mouse"/>
</dbReference>
<dbReference type="AGR" id="MGI:2385261"/>
<dbReference type="CTD" id="4849"/>
<dbReference type="MGI" id="MGI:2385261">
    <property type="gene designation" value="Cnot3"/>
</dbReference>
<dbReference type="VEuPathDB" id="HostDB:ENSMUSG00000035632"/>
<dbReference type="eggNOG" id="KOG2150">
    <property type="taxonomic scope" value="Eukaryota"/>
</dbReference>
<dbReference type="GeneTree" id="ENSGT00390000014743"/>
<dbReference type="HOGENOM" id="CLU_013819_1_1_1"/>
<dbReference type="InParanoid" id="Q8K0V4"/>
<dbReference type="OMA" id="NHYPHAP"/>
<dbReference type="OrthoDB" id="293823at2759"/>
<dbReference type="PhylomeDB" id="Q8K0V4"/>
<dbReference type="TreeFam" id="TF321963"/>
<dbReference type="Reactome" id="R-MMU-429947">
    <property type="pathway name" value="Deadenylation of mRNA"/>
</dbReference>
<dbReference type="Reactome" id="R-MMU-6804115">
    <property type="pathway name" value="TP53 regulates transcription of additional cell cycle genes whose exact role in the p53 pathway remain uncertain"/>
</dbReference>
<dbReference type="BioGRID-ORCS" id="232791">
    <property type="hits" value="28 hits in 82 CRISPR screens"/>
</dbReference>
<dbReference type="ChiTaRS" id="Cnot3">
    <property type="organism name" value="mouse"/>
</dbReference>
<dbReference type="PRO" id="PR:Q8K0V4"/>
<dbReference type="Proteomes" id="UP000000589">
    <property type="component" value="Chromosome 7"/>
</dbReference>
<dbReference type="RNAct" id="Q8K0V4">
    <property type="molecule type" value="protein"/>
</dbReference>
<dbReference type="Bgee" id="ENSMUSG00000035632">
    <property type="expression patterns" value="Expressed in animal zygote and 199 other cell types or tissues"/>
</dbReference>
<dbReference type="ExpressionAtlas" id="Q8K0V4">
    <property type="expression patterns" value="baseline and differential"/>
</dbReference>
<dbReference type="GO" id="GO:0030014">
    <property type="term" value="C:CCR4-NOT complex"/>
    <property type="evidence" value="ECO:0000250"/>
    <property type="project" value="UniProtKB"/>
</dbReference>
<dbReference type="GO" id="GO:0030015">
    <property type="term" value="C:CCR4-NOT core complex"/>
    <property type="evidence" value="ECO:0007669"/>
    <property type="project" value="InterPro"/>
</dbReference>
<dbReference type="GO" id="GO:0005829">
    <property type="term" value="C:cytosol"/>
    <property type="evidence" value="ECO:0000304"/>
    <property type="project" value="Reactome"/>
</dbReference>
<dbReference type="GO" id="GO:0005634">
    <property type="term" value="C:nucleus"/>
    <property type="evidence" value="ECO:0007669"/>
    <property type="project" value="UniProtKB-SubCell"/>
</dbReference>
<dbReference type="GO" id="GO:0000932">
    <property type="term" value="C:P-body"/>
    <property type="evidence" value="ECO:0000314"/>
    <property type="project" value="UniProtKB"/>
</dbReference>
<dbReference type="GO" id="GO:0033147">
    <property type="term" value="P:negative regulation of intracellular estrogen receptor signaling pathway"/>
    <property type="evidence" value="ECO:0000250"/>
    <property type="project" value="UniProtKB"/>
</dbReference>
<dbReference type="GO" id="GO:0120162">
    <property type="term" value="P:positive regulation of cold-induced thermogenesis"/>
    <property type="evidence" value="ECO:0000315"/>
    <property type="project" value="YuBioLab"/>
</dbReference>
<dbReference type="GO" id="GO:0006355">
    <property type="term" value="P:regulation of DNA-templated transcription"/>
    <property type="evidence" value="ECO:0007669"/>
    <property type="project" value="InterPro"/>
</dbReference>
<dbReference type="GO" id="GO:2000036">
    <property type="term" value="P:regulation of stem cell population maintenance"/>
    <property type="evidence" value="ECO:0000315"/>
    <property type="project" value="UniProtKB"/>
</dbReference>
<dbReference type="GO" id="GO:0006417">
    <property type="term" value="P:regulation of translation"/>
    <property type="evidence" value="ECO:0007669"/>
    <property type="project" value="UniProtKB-KW"/>
</dbReference>
<dbReference type="GO" id="GO:0031047">
    <property type="term" value="P:regulatory ncRNA-mediated gene silencing"/>
    <property type="evidence" value="ECO:0007669"/>
    <property type="project" value="UniProtKB-KW"/>
</dbReference>
<dbReference type="GO" id="GO:0001829">
    <property type="term" value="P:trophectodermal cell differentiation"/>
    <property type="evidence" value="ECO:0000315"/>
    <property type="project" value="UniProtKB"/>
</dbReference>
<dbReference type="FunFam" id="2.30.30.1020:FF:000002">
    <property type="entry name" value="CCR4-NOT transcription complex subunit 3"/>
    <property type="match status" value="1"/>
</dbReference>
<dbReference type="Gene3D" id="2.30.30.1020">
    <property type="entry name" value="CCR4-NOT complex subunit 2/3/5, C-terminal domain"/>
    <property type="match status" value="1"/>
</dbReference>
<dbReference type="InterPro" id="IPR038635">
    <property type="entry name" value="CCR4-NOT_su2/3/5_C_sf"/>
</dbReference>
<dbReference type="InterPro" id="IPR012270">
    <property type="entry name" value="CCR4-NOT_su3/5"/>
</dbReference>
<dbReference type="InterPro" id="IPR040168">
    <property type="entry name" value="Not2/3/5"/>
</dbReference>
<dbReference type="InterPro" id="IPR007282">
    <property type="entry name" value="NOT2/3/5_C"/>
</dbReference>
<dbReference type="InterPro" id="IPR007207">
    <property type="entry name" value="Not_N"/>
</dbReference>
<dbReference type="PANTHER" id="PTHR23326">
    <property type="entry name" value="CCR4 NOT-RELATED"/>
    <property type="match status" value="1"/>
</dbReference>
<dbReference type="Pfam" id="PF04153">
    <property type="entry name" value="NOT2_3_5_C"/>
    <property type="match status" value="1"/>
</dbReference>
<dbReference type="Pfam" id="PF04065">
    <property type="entry name" value="Not3"/>
    <property type="match status" value="1"/>
</dbReference>
<dbReference type="PIRSF" id="PIRSF005290">
    <property type="entry name" value="NOT_su_3_5"/>
    <property type="match status" value="1"/>
</dbReference>